<feature type="chain" id="PRO_0000460723" description="2-ketoarginine methyltransferase">
    <location>
        <begin position="1"/>
        <end position="337"/>
    </location>
</feature>
<accession>M1T9N7</accession>
<proteinExistence type="evidence at protein level"/>
<sequence>MDEGFELRLIEALQPVRGFALAQGIYHLFNSGLYERLADGPQEVPGMSASLGLDASRTSGFLRYLANENYLALSGDTVALTEKGRALGPYRPWYELLVGGYAETFQQITDVLNGKGYATRDGRLVGIGSCGMSAYDALPLVRELMSDLPAAPASVVDLGCGDGTFLAGLVDGSGTVTGIGIDPYAPEESPAEGLRFVRSGATDYLREADTPESGPDSSQICLAAFLLQEVLEQEGRGAVVELVRAALRRSGHLAVVEVDHRPADPQVMRHGLGLAYYNPYYLLHVLTEQRLESDAFWRELFQEAGARVVTRRVADPRVDSTGLEVGYLLTRREGAAQ</sequence>
<comment type="function">
    <text evidence="1">S-adenosyl-L-methionine-dependent methyltransferase involved in the formation of the rare amino acid 3-methylarginine (MeArg), which is incorporated into the peptidyl nucleoside antibiotic arginomycin (PubMed:24907335). Transfers the methyl group from S-adenosyl-L-methionine into 5-guanidino-2-oxopentanoate acid to yield 5-guanidino-3-methyl-2-oxopentanoate, a precursor of MeArg (PubMed:24907335).</text>
</comment>
<comment type="catalytic activity">
    <reaction evidence="1">
        <text>5-guanidino-2-oxopentanoate + S-adenosyl-L-methionine = (3R)-5-guanidino-3-methyl-2-oxopentanoate + S-adenosyl-L-homocysteine + H(+)</text>
        <dbReference type="Rhea" id="RHEA:32663"/>
        <dbReference type="ChEBI" id="CHEBI:15378"/>
        <dbReference type="ChEBI" id="CHEBI:57856"/>
        <dbReference type="ChEBI" id="CHEBI:58489"/>
        <dbReference type="ChEBI" id="CHEBI:59789"/>
        <dbReference type="ChEBI" id="CHEBI:229580"/>
        <dbReference type="EC" id="2.1.1.243"/>
    </reaction>
    <physiologicalReaction direction="left-to-right" evidence="1">
        <dbReference type="Rhea" id="RHEA:32664"/>
    </physiologicalReaction>
</comment>
<comment type="pathway">
    <text evidence="4">Antibiotic biosynthesis.</text>
</comment>
<comment type="similarity">
    <text evidence="3">Belongs to the 2-ketoarginine methyltransferase family.</text>
</comment>
<keyword id="KW-0045">Antibiotic biosynthesis</keyword>
<keyword id="KW-0489">Methyltransferase</keyword>
<keyword id="KW-0949">S-adenosyl-L-methionine</keyword>
<keyword id="KW-0808">Transferase</keyword>
<protein>
    <recommendedName>
        <fullName evidence="3">2-ketoarginine methyltransferase</fullName>
        <ecNumber evidence="1">2.1.1.243</ecNumber>
    </recommendedName>
    <alternativeName>
        <fullName evidence="3">5-guanidino-2-oxopentanoate (3R)-methyltransferase</fullName>
    </alternativeName>
</protein>
<reference key="1">
    <citation type="journal article" date="2014" name="Appl. Environ. Microbiol.">
        <title>Biosynthesis of the beta-methylarginine residue of peptidyl nucleoside arginomycin in Streptomyces arginensis NRRL 15941.</title>
        <authorList>
            <person name="Feng J."/>
            <person name="Wu J."/>
            <person name="Gao J."/>
            <person name="Xia Z."/>
            <person name="Deng Z."/>
            <person name="He X."/>
        </authorList>
    </citation>
    <scope>NUCLEOTIDE SEQUENCE [GENOMIC DNA]</scope>
    <scope>FUNCTION</scope>
    <scope>CATALYTIC ACTIVITY</scope>
    <scope>PATHWAY</scope>
    <source>
        <strain>NRRL 15941</strain>
    </source>
</reference>
<dbReference type="EC" id="2.1.1.243" evidence="1"/>
<dbReference type="EMBL" id="KC181124">
    <property type="protein sequence ID" value="AGG35704.1"/>
    <property type="molecule type" value="Genomic_DNA"/>
</dbReference>
<dbReference type="SMR" id="M1T9N7"/>
<dbReference type="KEGG" id="ag:AGG35704"/>
<dbReference type="BioCyc" id="MetaCyc:MONOMER-18913"/>
<dbReference type="GO" id="GO:0008168">
    <property type="term" value="F:methyltransferase activity"/>
    <property type="evidence" value="ECO:0007669"/>
    <property type="project" value="UniProtKB-KW"/>
</dbReference>
<dbReference type="GO" id="GO:0017000">
    <property type="term" value="P:antibiotic biosynthetic process"/>
    <property type="evidence" value="ECO:0007669"/>
    <property type="project" value="UniProtKB-KW"/>
</dbReference>
<dbReference type="GO" id="GO:0032259">
    <property type="term" value="P:methylation"/>
    <property type="evidence" value="ECO:0007669"/>
    <property type="project" value="UniProtKB-KW"/>
</dbReference>
<dbReference type="CDD" id="cd02440">
    <property type="entry name" value="AdoMet_MTases"/>
    <property type="match status" value="1"/>
</dbReference>
<dbReference type="Gene3D" id="3.40.50.150">
    <property type="entry name" value="Vaccinia Virus protein VP39"/>
    <property type="match status" value="1"/>
</dbReference>
<dbReference type="Gene3D" id="1.10.10.10">
    <property type="entry name" value="Winged helix-like DNA-binding domain superfamily/Winged helix DNA-binding domain"/>
    <property type="match status" value="1"/>
</dbReference>
<dbReference type="InterPro" id="IPR030899">
    <property type="entry name" value="MrsA"/>
</dbReference>
<dbReference type="InterPro" id="IPR029063">
    <property type="entry name" value="SAM-dependent_MTases_sf"/>
</dbReference>
<dbReference type="InterPro" id="IPR036388">
    <property type="entry name" value="WH-like_DNA-bd_sf"/>
</dbReference>
<dbReference type="InterPro" id="IPR036390">
    <property type="entry name" value="WH_DNA-bd_sf"/>
</dbReference>
<dbReference type="NCBIfam" id="TIGR04543">
    <property type="entry name" value="ketoArg_3Met"/>
    <property type="match status" value="1"/>
</dbReference>
<dbReference type="SUPFAM" id="SSF53335">
    <property type="entry name" value="S-adenosyl-L-methionine-dependent methyltransferases"/>
    <property type="match status" value="1"/>
</dbReference>
<dbReference type="SUPFAM" id="SSF46785">
    <property type="entry name" value="Winged helix' DNA-binding domain"/>
    <property type="match status" value="1"/>
</dbReference>
<evidence type="ECO:0000269" key="1">
    <source>
    </source>
</evidence>
<evidence type="ECO:0000303" key="2">
    <source>
    </source>
</evidence>
<evidence type="ECO:0000305" key="3"/>
<evidence type="ECO:0000305" key="4">
    <source>
    </source>
</evidence>
<organism>
    <name type="scientific">Streptomyces arginensis</name>
    <dbReference type="NCBI Taxonomy" id="1295550"/>
    <lineage>
        <taxon>Bacteria</taxon>
        <taxon>Bacillati</taxon>
        <taxon>Actinomycetota</taxon>
        <taxon>Actinomycetes</taxon>
        <taxon>Kitasatosporales</taxon>
        <taxon>Streptomycetaceae</taxon>
        <taxon>Streptomyces</taxon>
    </lineage>
</organism>
<name>ARGN_STREL</name>
<gene>
    <name evidence="2" type="primary">argN</name>
</gene>